<comment type="function">
    <text evidence="1">Catalyzes the reductive methylation of 2'-deoxyuridine-5'-monophosphate (dUMP) to 2'-deoxythymidine-5'-monophosphate (dTMP) while utilizing 5,10-methylenetetrahydrofolate (mTHF) as the methyl donor and reductant in the reaction, yielding dihydrofolate (DHF) as a by-product. This enzymatic reaction provides an intracellular de novo source of dTMP, an essential precursor for DNA biosynthesis.</text>
</comment>
<comment type="catalytic activity">
    <reaction evidence="1">
        <text>dUMP + (6R)-5,10-methylene-5,6,7,8-tetrahydrofolate = 7,8-dihydrofolate + dTMP</text>
        <dbReference type="Rhea" id="RHEA:12104"/>
        <dbReference type="ChEBI" id="CHEBI:15636"/>
        <dbReference type="ChEBI" id="CHEBI:57451"/>
        <dbReference type="ChEBI" id="CHEBI:63528"/>
        <dbReference type="ChEBI" id="CHEBI:246422"/>
        <dbReference type="EC" id="2.1.1.45"/>
    </reaction>
</comment>
<comment type="pathway">
    <text evidence="1">Pyrimidine metabolism; dTTP biosynthesis.</text>
</comment>
<comment type="subunit">
    <text evidence="1">Homodimer.</text>
</comment>
<comment type="subcellular location">
    <subcellularLocation>
        <location evidence="1">Cytoplasm</location>
    </subcellularLocation>
</comment>
<comment type="similarity">
    <text evidence="1">Belongs to the thymidylate synthase family. Bacterial-type ThyA subfamily.</text>
</comment>
<sequence>MRTYLDLLQHVLDHGVDRDDRTGTGTRSVFGYQMRFDLEEGFPVLTTKKLHLRSIIHELLWFLKGDTNIAYLKENGVTIWDEWADENGDLGPVYGYQWRSWPAPDGRHIDQIANLLKMLHTNPQSRRLIVSAWNPALVDEMALPPCHCLFQFYVANGRLSCQLYQRSADIFLGVPFNIASYALLTMMIAQVTGLKPGEFIHTLGDAHIYSNHFEQARLQLTRTPKKLPVMHINPDVKDLFAFRFEDFRLDGYEADPTIKAPIAV</sequence>
<dbReference type="EC" id="2.1.1.45" evidence="1"/>
<dbReference type="EMBL" id="AE017223">
    <property type="protein sequence ID" value="AAX74725.1"/>
    <property type="molecule type" value="Genomic_DNA"/>
</dbReference>
<dbReference type="RefSeq" id="WP_002964508.1">
    <property type="nucleotide sequence ID" value="NC_006932.1"/>
</dbReference>
<dbReference type="SMR" id="Q57CA9"/>
<dbReference type="EnsemblBacteria" id="AAX74725">
    <property type="protein sequence ID" value="AAX74725"/>
    <property type="gene ID" value="BruAb1_1394"/>
</dbReference>
<dbReference type="KEGG" id="bmb:BruAb1_1394"/>
<dbReference type="HOGENOM" id="CLU_021669_0_0_5"/>
<dbReference type="UniPathway" id="UPA00575"/>
<dbReference type="Proteomes" id="UP000000540">
    <property type="component" value="Chromosome I"/>
</dbReference>
<dbReference type="GO" id="GO:0005829">
    <property type="term" value="C:cytosol"/>
    <property type="evidence" value="ECO:0007669"/>
    <property type="project" value="TreeGrafter"/>
</dbReference>
<dbReference type="GO" id="GO:0004799">
    <property type="term" value="F:thymidylate synthase activity"/>
    <property type="evidence" value="ECO:0007669"/>
    <property type="project" value="UniProtKB-UniRule"/>
</dbReference>
<dbReference type="GO" id="GO:0006231">
    <property type="term" value="P:dTMP biosynthetic process"/>
    <property type="evidence" value="ECO:0007669"/>
    <property type="project" value="UniProtKB-UniRule"/>
</dbReference>
<dbReference type="GO" id="GO:0006235">
    <property type="term" value="P:dTTP biosynthetic process"/>
    <property type="evidence" value="ECO:0007669"/>
    <property type="project" value="UniProtKB-UniRule"/>
</dbReference>
<dbReference type="GO" id="GO:0032259">
    <property type="term" value="P:methylation"/>
    <property type="evidence" value="ECO:0007669"/>
    <property type="project" value="UniProtKB-KW"/>
</dbReference>
<dbReference type="CDD" id="cd00351">
    <property type="entry name" value="TS_Pyrimidine_HMase"/>
    <property type="match status" value="1"/>
</dbReference>
<dbReference type="FunFam" id="3.30.572.10:FF:000001">
    <property type="entry name" value="Thymidylate synthase"/>
    <property type="match status" value="1"/>
</dbReference>
<dbReference type="Gene3D" id="3.30.572.10">
    <property type="entry name" value="Thymidylate synthase/dCMP hydroxymethylase domain"/>
    <property type="match status" value="1"/>
</dbReference>
<dbReference type="HAMAP" id="MF_00008">
    <property type="entry name" value="Thymidy_synth_bact"/>
    <property type="match status" value="1"/>
</dbReference>
<dbReference type="InterPro" id="IPR045097">
    <property type="entry name" value="Thymidate_synth/dCMP_Mease"/>
</dbReference>
<dbReference type="InterPro" id="IPR023451">
    <property type="entry name" value="Thymidate_synth/dCMP_Mease_dom"/>
</dbReference>
<dbReference type="InterPro" id="IPR036926">
    <property type="entry name" value="Thymidate_synth/dCMP_Mease_sf"/>
</dbReference>
<dbReference type="InterPro" id="IPR000398">
    <property type="entry name" value="Thymidylate_synthase"/>
</dbReference>
<dbReference type="InterPro" id="IPR020940">
    <property type="entry name" value="Thymidylate_synthase_AS"/>
</dbReference>
<dbReference type="NCBIfam" id="NF002497">
    <property type="entry name" value="PRK01827.1-3"/>
    <property type="match status" value="1"/>
</dbReference>
<dbReference type="NCBIfam" id="NF002499">
    <property type="entry name" value="PRK01827.1-5"/>
    <property type="match status" value="1"/>
</dbReference>
<dbReference type="NCBIfam" id="TIGR03284">
    <property type="entry name" value="thym_sym"/>
    <property type="match status" value="2"/>
</dbReference>
<dbReference type="PANTHER" id="PTHR11548:SF9">
    <property type="entry name" value="THYMIDYLATE SYNTHASE"/>
    <property type="match status" value="1"/>
</dbReference>
<dbReference type="PANTHER" id="PTHR11548">
    <property type="entry name" value="THYMIDYLATE SYNTHASE 1"/>
    <property type="match status" value="1"/>
</dbReference>
<dbReference type="Pfam" id="PF00303">
    <property type="entry name" value="Thymidylat_synt"/>
    <property type="match status" value="1"/>
</dbReference>
<dbReference type="PRINTS" id="PR00108">
    <property type="entry name" value="THYMDSNTHASE"/>
</dbReference>
<dbReference type="SUPFAM" id="SSF55831">
    <property type="entry name" value="Thymidylate synthase/dCMP hydroxymethylase"/>
    <property type="match status" value="1"/>
</dbReference>
<dbReference type="PROSITE" id="PS00091">
    <property type="entry name" value="THYMIDYLATE_SYNTHASE"/>
    <property type="match status" value="1"/>
</dbReference>
<feature type="chain" id="PRO_1000000584" description="Thymidylate synthase">
    <location>
        <begin position="1"/>
        <end position="264"/>
    </location>
</feature>
<feature type="active site" description="Nucleophile" evidence="1">
    <location>
        <position position="146"/>
    </location>
</feature>
<feature type="binding site" description="in other chain" evidence="1">
    <location>
        <position position="21"/>
    </location>
    <ligand>
        <name>dUMP</name>
        <dbReference type="ChEBI" id="CHEBI:246422"/>
        <note>ligand shared between dimeric partners</note>
    </ligand>
</feature>
<feature type="binding site" evidence="1">
    <location>
        <position position="51"/>
    </location>
    <ligand>
        <name>(6R)-5,10-methylene-5,6,7,8-tetrahydrofolate</name>
        <dbReference type="ChEBI" id="CHEBI:15636"/>
    </ligand>
</feature>
<feature type="binding site" evidence="1">
    <location>
        <begin position="126"/>
        <end position="127"/>
    </location>
    <ligand>
        <name>dUMP</name>
        <dbReference type="ChEBI" id="CHEBI:246422"/>
        <note>ligand shared between dimeric partners</note>
    </ligand>
</feature>
<feature type="binding site" description="in other chain" evidence="1">
    <location>
        <begin position="166"/>
        <end position="169"/>
    </location>
    <ligand>
        <name>dUMP</name>
        <dbReference type="ChEBI" id="CHEBI:246422"/>
        <note>ligand shared between dimeric partners</note>
    </ligand>
</feature>
<feature type="binding site" evidence="1">
    <location>
        <position position="169"/>
    </location>
    <ligand>
        <name>(6R)-5,10-methylene-5,6,7,8-tetrahydrofolate</name>
        <dbReference type="ChEBI" id="CHEBI:15636"/>
    </ligand>
</feature>
<feature type="binding site" description="in other chain" evidence="1">
    <location>
        <position position="177"/>
    </location>
    <ligand>
        <name>dUMP</name>
        <dbReference type="ChEBI" id="CHEBI:246422"/>
        <note>ligand shared between dimeric partners</note>
    </ligand>
</feature>
<feature type="binding site" description="in other chain" evidence="1">
    <location>
        <begin position="207"/>
        <end position="209"/>
    </location>
    <ligand>
        <name>dUMP</name>
        <dbReference type="ChEBI" id="CHEBI:246422"/>
        <note>ligand shared between dimeric partners</note>
    </ligand>
</feature>
<feature type="binding site" evidence="1">
    <location>
        <position position="263"/>
    </location>
    <ligand>
        <name>(6R)-5,10-methylene-5,6,7,8-tetrahydrofolate</name>
        <dbReference type="ChEBI" id="CHEBI:15636"/>
    </ligand>
</feature>
<protein>
    <recommendedName>
        <fullName evidence="1">Thymidylate synthase</fullName>
        <shortName evidence="1">TS</shortName>
        <shortName evidence="1">TSase</shortName>
        <ecNumber evidence="1">2.1.1.45</ecNumber>
    </recommendedName>
</protein>
<proteinExistence type="inferred from homology"/>
<reference key="1">
    <citation type="journal article" date="2005" name="J. Bacteriol.">
        <title>Completion of the genome sequence of Brucella abortus and comparison to the highly similar genomes of Brucella melitensis and Brucella suis.</title>
        <authorList>
            <person name="Halling S.M."/>
            <person name="Peterson-Burch B.D."/>
            <person name="Bricker B.J."/>
            <person name="Zuerner R.L."/>
            <person name="Qing Z."/>
            <person name="Li L.-L."/>
            <person name="Kapur V."/>
            <person name="Alt D.P."/>
            <person name="Olsen S.C."/>
        </authorList>
    </citation>
    <scope>NUCLEOTIDE SEQUENCE [LARGE SCALE GENOMIC DNA]</scope>
    <source>
        <strain>9-941</strain>
    </source>
</reference>
<organism>
    <name type="scientific">Brucella abortus biovar 1 (strain 9-941)</name>
    <dbReference type="NCBI Taxonomy" id="262698"/>
    <lineage>
        <taxon>Bacteria</taxon>
        <taxon>Pseudomonadati</taxon>
        <taxon>Pseudomonadota</taxon>
        <taxon>Alphaproteobacteria</taxon>
        <taxon>Hyphomicrobiales</taxon>
        <taxon>Brucellaceae</taxon>
        <taxon>Brucella/Ochrobactrum group</taxon>
        <taxon>Brucella</taxon>
    </lineage>
</organism>
<evidence type="ECO:0000255" key="1">
    <source>
        <dbReference type="HAMAP-Rule" id="MF_00008"/>
    </source>
</evidence>
<name>TYSY_BRUAB</name>
<keyword id="KW-0963">Cytoplasm</keyword>
<keyword id="KW-0489">Methyltransferase</keyword>
<keyword id="KW-0545">Nucleotide biosynthesis</keyword>
<keyword id="KW-0808">Transferase</keyword>
<gene>
    <name evidence="1" type="primary">thyA</name>
    <name type="ordered locus">BruAb1_1394</name>
</gene>
<accession>Q57CA9</accession>